<comment type="similarity">
    <text evidence="1">Belongs to the UPF0127 family.</text>
</comment>
<reference key="1">
    <citation type="journal article" date="1998" name="DNA Res.">
        <title>Complete sequence and gene organization of the genome of a hyper-thermophilic archaebacterium, Pyrococcus horikoshii OT3.</title>
        <authorList>
            <person name="Kawarabayasi Y."/>
            <person name="Sawada M."/>
            <person name="Horikawa H."/>
            <person name="Haikawa Y."/>
            <person name="Hino Y."/>
            <person name="Yamamoto S."/>
            <person name="Sekine M."/>
            <person name="Baba S."/>
            <person name="Kosugi H."/>
            <person name="Hosoyama A."/>
            <person name="Nagai Y."/>
            <person name="Sakai M."/>
            <person name="Ogura K."/>
            <person name="Otsuka R."/>
            <person name="Nakazawa H."/>
            <person name="Takamiya M."/>
            <person name="Ohfuku Y."/>
            <person name="Funahashi T."/>
            <person name="Tanaka T."/>
            <person name="Kudoh Y."/>
            <person name="Yamazaki J."/>
            <person name="Kushida N."/>
            <person name="Oguchi A."/>
            <person name="Aoki K."/>
            <person name="Yoshizawa T."/>
            <person name="Nakamura Y."/>
            <person name="Robb F.T."/>
            <person name="Horikoshi K."/>
            <person name="Masuchi Y."/>
            <person name="Shizuya H."/>
            <person name="Kikuchi H."/>
        </authorList>
    </citation>
    <scope>NUCLEOTIDE SEQUENCE [LARGE SCALE GENOMIC DNA]</scope>
    <source>
        <strain>ATCC 700860 / DSM 12428 / JCM 9974 / NBRC 100139 / OT-3</strain>
    </source>
</reference>
<name>Y1112_PYRHO</name>
<proteinExistence type="inferred from homology"/>
<gene>
    <name type="ordered locus">PH1112</name>
</gene>
<organism>
    <name type="scientific">Pyrococcus horikoshii (strain ATCC 700860 / DSM 12428 / JCM 9974 / NBRC 100139 / OT-3)</name>
    <dbReference type="NCBI Taxonomy" id="70601"/>
    <lineage>
        <taxon>Archaea</taxon>
        <taxon>Methanobacteriati</taxon>
        <taxon>Methanobacteriota</taxon>
        <taxon>Thermococci</taxon>
        <taxon>Thermococcales</taxon>
        <taxon>Thermococcaceae</taxon>
        <taxon>Pyrococcus</taxon>
    </lineage>
</organism>
<accession>O58839</accession>
<feature type="chain" id="PRO_0000150054" description="UPF0127 protein PH1112">
    <location>
        <begin position="1"/>
        <end position="115"/>
    </location>
</feature>
<sequence>MIVNESKNLSWEGEVRIADSFIKRALGLMFKKPRYALVFILPLETRINASIHGFFMLESIDVIFLDSNFRVVDVTTLKPWRIYIPKARARYIIEGPRGLKESIKPEFGDKIKWFT</sequence>
<evidence type="ECO:0000305" key="1"/>
<protein>
    <recommendedName>
        <fullName>UPF0127 protein PH1112</fullName>
    </recommendedName>
</protein>
<dbReference type="EMBL" id="BA000001">
    <property type="protein sequence ID" value="BAA30211.1"/>
    <property type="molecule type" value="Genomic_DNA"/>
</dbReference>
<dbReference type="PIR" id="A71052">
    <property type="entry name" value="A71052"/>
</dbReference>
<dbReference type="RefSeq" id="WP_010885196.1">
    <property type="nucleotide sequence ID" value="NC_000961.1"/>
</dbReference>
<dbReference type="SMR" id="O58839"/>
<dbReference type="STRING" id="70601.gene:9378071"/>
<dbReference type="EnsemblBacteria" id="BAA30211">
    <property type="protein sequence ID" value="BAA30211"/>
    <property type="gene ID" value="BAA30211"/>
</dbReference>
<dbReference type="GeneID" id="1443431"/>
<dbReference type="KEGG" id="pho:PH1112"/>
<dbReference type="eggNOG" id="arCOG03113">
    <property type="taxonomic scope" value="Archaea"/>
</dbReference>
<dbReference type="OrthoDB" id="64208at2157"/>
<dbReference type="Proteomes" id="UP000000752">
    <property type="component" value="Chromosome"/>
</dbReference>
<dbReference type="Gene3D" id="2.60.120.1140">
    <property type="entry name" value="Protein of unknown function DUF192"/>
    <property type="match status" value="1"/>
</dbReference>
<dbReference type="HAMAP" id="MF_00263">
    <property type="entry name" value="UPF0127"/>
    <property type="match status" value="1"/>
</dbReference>
<dbReference type="InterPro" id="IPR003795">
    <property type="entry name" value="DUF192"/>
</dbReference>
<dbReference type="InterPro" id="IPR038695">
    <property type="entry name" value="Saro_0823-like_sf"/>
</dbReference>
<dbReference type="InterPro" id="IPR022906">
    <property type="entry name" value="UPF0127"/>
</dbReference>
<dbReference type="NCBIfam" id="NF002996">
    <property type="entry name" value="PRK03760.1"/>
    <property type="match status" value="1"/>
</dbReference>
<dbReference type="Pfam" id="PF02643">
    <property type="entry name" value="DUF192"/>
    <property type="match status" value="1"/>
</dbReference>